<dbReference type="EC" id="7.1.1.-" evidence="1"/>
<dbReference type="EMBL" id="CP000698">
    <property type="protein sequence ID" value="ABQ28385.1"/>
    <property type="molecule type" value="Genomic_DNA"/>
</dbReference>
<dbReference type="SMR" id="A5G9B7"/>
<dbReference type="STRING" id="351605.Gura_4242"/>
<dbReference type="KEGG" id="gur:Gura_4242"/>
<dbReference type="HOGENOM" id="CLU_042628_6_0_7"/>
<dbReference type="Proteomes" id="UP000006695">
    <property type="component" value="Chromosome"/>
</dbReference>
<dbReference type="GO" id="GO:0005886">
    <property type="term" value="C:plasma membrane"/>
    <property type="evidence" value="ECO:0007669"/>
    <property type="project" value="UniProtKB-SubCell"/>
</dbReference>
<dbReference type="GO" id="GO:0008137">
    <property type="term" value="F:NADH dehydrogenase (ubiquinone) activity"/>
    <property type="evidence" value="ECO:0007669"/>
    <property type="project" value="InterPro"/>
</dbReference>
<dbReference type="GO" id="GO:0050136">
    <property type="term" value="F:NADH:ubiquinone reductase (non-electrogenic) activity"/>
    <property type="evidence" value="ECO:0007669"/>
    <property type="project" value="UniProtKB-UniRule"/>
</dbReference>
<dbReference type="GO" id="GO:0048038">
    <property type="term" value="F:quinone binding"/>
    <property type="evidence" value="ECO:0007669"/>
    <property type="project" value="UniProtKB-KW"/>
</dbReference>
<dbReference type="Gene3D" id="3.30.460.80">
    <property type="entry name" value="NADH:ubiquinone oxidoreductase, 30kDa subunit"/>
    <property type="match status" value="1"/>
</dbReference>
<dbReference type="HAMAP" id="MF_01357">
    <property type="entry name" value="NDH1_NuoC"/>
    <property type="match status" value="1"/>
</dbReference>
<dbReference type="InterPro" id="IPR010218">
    <property type="entry name" value="NADH_DH_suC"/>
</dbReference>
<dbReference type="InterPro" id="IPR037232">
    <property type="entry name" value="NADH_quin_OxRdtase_su_C/D-like"/>
</dbReference>
<dbReference type="InterPro" id="IPR001268">
    <property type="entry name" value="NADH_UbQ_OxRdtase_30kDa_su"/>
</dbReference>
<dbReference type="InterPro" id="IPR020396">
    <property type="entry name" value="NADH_UbQ_OxRdtase_CS"/>
</dbReference>
<dbReference type="NCBIfam" id="TIGR01961">
    <property type="entry name" value="NuoC_fam"/>
    <property type="match status" value="1"/>
</dbReference>
<dbReference type="PANTHER" id="PTHR10884:SF14">
    <property type="entry name" value="NADH DEHYDROGENASE [UBIQUINONE] IRON-SULFUR PROTEIN 3, MITOCHONDRIAL"/>
    <property type="match status" value="1"/>
</dbReference>
<dbReference type="PANTHER" id="PTHR10884">
    <property type="entry name" value="NADH DEHYDROGENASE UBIQUINONE IRON-SULFUR PROTEIN 3"/>
    <property type="match status" value="1"/>
</dbReference>
<dbReference type="Pfam" id="PF00329">
    <property type="entry name" value="Complex1_30kDa"/>
    <property type="match status" value="1"/>
</dbReference>
<dbReference type="SUPFAM" id="SSF143243">
    <property type="entry name" value="Nqo5-like"/>
    <property type="match status" value="1"/>
</dbReference>
<dbReference type="PROSITE" id="PS00542">
    <property type="entry name" value="COMPLEX1_30K"/>
    <property type="match status" value="1"/>
</dbReference>
<proteinExistence type="inferred from homology"/>
<feature type="chain" id="PRO_0000358108" description="NADH-quinone oxidoreductase subunit C">
    <location>
        <begin position="1"/>
        <end position="164"/>
    </location>
</feature>
<keyword id="KW-0997">Cell inner membrane</keyword>
<keyword id="KW-1003">Cell membrane</keyword>
<keyword id="KW-0472">Membrane</keyword>
<keyword id="KW-0520">NAD</keyword>
<keyword id="KW-0874">Quinone</keyword>
<keyword id="KW-1185">Reference proteome</keyword>
<keyword id="KW-1278">Translocase</keyword>
<keyword id="KW-0813">Transport</keyword>
<keyword id="KW-0830">Ubiquinone</keyword>
<name>NUOC_GEOUR</name>
<comment type="function">
    <text evidence="1">NDH-1 shuttles electrons from NADH, via FMN and iron-sulfur (Fe-S) centers, to quinones in the respiratory chain. The immediate electron acceptor for the enzyme in this species is believed to be ubiquinone. Couples the redox reaction to proton translocation (for every two electrons transferred, four hydrogen ions are translocated across the cytoplasmic membrane), and thus conserves the redox energy in a proton gradient.</text>
</comment>
<comment type="catalytic activity">
    <reaction evidence="1">
        <text>a quinone + NADH + 5 H(+)(in) = a quinol + NAD(+) + 4 H(+)(out)</text>
        <dbReference type="Rhea" id="RHEA:57888"/>
        <dbReference type="ChEBI" id="CHEBI:15378"/>
        <dbReference type="ChEBI" id="CHEBI:24646"/>
        <dbReference type="ChEBI" id="CHEBI:57540"/>
        <dbReference type="ChEBI" id="CHEBI:57945"/>
        <dbReference type="ChEBI" id="CHEBI:132124"/>
    </reaction>
</comment>
<comment type="subunit">
    <text evidence="1">NDH-1 is composed of 14 different subunits. Subunits NuoB, C, D, E, F, and G constitute the peripheral sector of the complex.</text>
</comment>
<comment type="subcellular location">
    <subcellularLocation>
        <location evidence="1">Cell inner membrane</location>
        <topology evidence="1">Peripheral membrane protein</topology>
        <orientation evidence="1">Cytoplasmic side</orientation>
    </subcellularLocation>
</comment>
<comment type="similarity">
    <text evidence="1">Belongs to the complex I 30 kDa subunit family.</text>
</comment>
<gene>
    <name evidence="1" type="primary">nuoC</name>
    <name type="ordered locus">Gura_4242</name>
</gene>
<organism>
    <name type="scientific">Geotalea uraniireducens (strain Rf4)</name>
    <name type="common">Geobacter uraniireducens</name>
    <dbReference type="NCBI Taxonomy" id="351605"/>
    <lineage>
        <taxon>Bacteria</taxon>
        <taxon>Pseudomonadati</taxon>
        <taxon>Thermodesulfobacteriota</taxon>
        <taxon>Desulfuromonadia</taxon>
        <taxon>Geobacterales</taxon>
        <taxon>Geobacteraceae</taxon>
        <taxon>Geotalea</taxon>
    </lineage>
</organism>
<sequence length="164" mass="19113">MADMAENNRAVIKLREKFASSILEVKEFRGEVTVIVRKEDIVALCKFLKEELRYNLLTDVTAVDYLGKDPRFMVVYNIYSIPNKDRLRIKAPVTEGECTIDTVCGVWTTANWLEREAYDLMGIIFKNHPDLRRIMMTDDWVGHPLRKDYPLQGPDREPYKGRLS</sequence>
<accession>A5G9B7</accession>
<reference key="1">
    <citation type="submission" date="2007-05" db="EMBL/GenBank/DDBJ databases">
        <title>Complete sequence of Geobacter uraniireducens Rf4.</title>
        <authorList>
            <consortium name="US DOE Joint Genome Institute"/>
            <person name="Copeland A."/>
            <person name="Lucas S."/>
            <person name="Lapidus A."/>
            <person name="Barry K."/>
            <person name="Detter J.C."/>
            <person name="Glavina del Rio T."/>
            <person name="Hammon N."/>
            <person name="Israni S."/>
            <person name="Dalin E."/>
            <person name="Tice H."/>
            <person name="Pitluck S."/>
            <person name="Chertkov O."/>
            <person name="Brettin T."/>
            <person name="Bruce D."/>
            <person name="Han C."/>
            <person name="Schmutz J."/>
            <person name="Larimer F."/>
            <person name="Land M."/>
            <person name="Hauser L."/>
            <person name="Kyrpides N."/>
            <person name="Mikhailova N."/>
            <person name="Shelobolina E."/>
            <person name="Aklujkar M."/>
            <person name="Lovley D."/>
            <person name="Richardson P."/>
        </authorList>
    </citation>
    <scope>NUCLEOTIDE SEQUENCE [LARGE SCALE GENOMIC DNA]</scope>
    <source>
        <strain>ATCC BAA-1134 / JCM 13001 / Rf4</strain>
    </source>
</reference>
<evidence type="ECO:0000255" key="1">
    <source>
        <dbReference type="HAMAP-Rule" id="MF_01357"/>
    </source>
</evidence>
<protein>
    <recommendedName>
        <fullName evidence="1">NADH-quinone oxidoreductase subunit C</fullName>
        <ecNumber evidence="1">7.1.1.-</ecNumber>
    </recommendedName>
    <alternativeName>
        <fullName evidence="1">NADH dehydrogenase I subunit C</fullName>
    </alternativeName>
    <alternativeName>
        <fullName evidence="1">NDH-1 subunit C</fullName>
    </alternativeName>
</protein>